<organism>
    <name type="scientific">Schizosaccharomyces pombe (strain 972 / ATCC 24843)</name>
    <name type="common">Fission yeast</name>
    <dbReference type="NCBI Taxonomy" id="284812"/>
    <lineage>
        <taxon>Eukaryota</taxon>
        <taxon>Fungi</taxon>
        <taxon>Dikarya</taxon>
        <taxon>Ascomycota</taxon>
        <taxon>Taphrinomycotina</taxon>
        <taxon>Schizosaccharomycetes</taxon>
        <taxon>Schizosaccharomycetales</taxon>
        <taxon>Schizosaccharomycetaceae</taxon>
        <taxon>Schizosaccharomyces</taxon>
    </lineage>
</organism>
<accession>O94408</accession>
<gene>
    <name type="primary">lsm2</name>
    <name type="ORF">SPCC1620.01c</name>
</gene>
<reference key="1">
    <citation type="journal article" date="2002" name="Nature">
        <title>The genome sequence of Schizosaccharomyces pombe.</title>
        <authorList>
            <person name="Wood V."/>
            <person name="Gwilliam R."/>
            <person name="Rajandream M.A."/>
            <person name="Lyne M.H."/>
            <person name="Lyne R."/>
            <person name="Stewart A."/>
            <person name="Sgouros J.G."/>
            <person name="Peat N."/>
            <person name="Hayles J."/>
            <person name="Baker S.G."/>
            <person name="Basham D."/>
            <person name="Bowman S."/>
            <person name="Brooks K."/>
            <person name="Brown D."/>
            <person name="Brown S."/>
            <person name="Chillingworth T."/>
            <person name="Churcher C.M."/>
            <person name="Collins M."/>
            <person name="Connor R."/>
            <person name="Cronin A."/>
            <person name="Davis P."/>
            <person name="Feltwell T."/>
            <person name="Fraser A."/>
            <person name="Gentles S."/>
            <person name="Goble A."/>
            <person name="Hamlin N."/>
            <person name="Harris D.E."/>
            <person name="Hidalgo J."/>
            <person name="Hodgson G."/>
            <person name="Holroyd S."/>
            <person name="Hornsby T."/>
            <person name="Howarth S."/>
            <person name="Huckle E.J."/>
            <person name="Hunt S."/>
            <person name="Jagels K."/>
            <person name="James K.D."/>
            <person name="Jones L."/>
            <person name="Jones M."/>
            <person name="Leather S."/>
            <person name="McDonald S."/>
            <person name="McLean J."/>
            <person name="Mooney P."/>
            <person name="Moule S."/>
            <person name="Mungall K.L."/>
            <person name="Murphy L.D."/>
            <person name="Niblett D."/>
            <person name="Odell C."/>
            <person name="Oliver K."/>
            <person name="O'Neil S."/>
            <person name="Pearson D."/>
            <person name="Quail M.A."/>
            <person name="Rabbinowitsch E."/>
            <person name="Rutherford K.M."/>
            <person name="Rutter S."/>
            <person name="Saunders D."/>
            <person name="Seeger K."/>
            <person name="Sharp S."/>
            <person name="Skelton J."/>
            <person name="Simmonds M.N."/>
            <person name="Squares R."/>
            <person name="Squares S."/>
            <person name="Stevens K."/>
            <person name="Taylor K."/>
            <person name="Taylor R.G."/>
            <person name="Tivey A."/>
            <person name="Walsh S.V."/>
            <person name="Warren T."/>
            <person name="Whitehead S."/>
            <person name="Woodward J.R."/>
            <person name="Volckaert G."/>
            <person name="Aert R."/>
            <person name="Robben J."/>
            <person name="Grymonprez B."/>
            <person name="Weltjens I."/>
            <person name="Vanstreels E."/>
            <person name="Rieger M."/>
            <person name="Schaefer M."/>
            <person name="Mueller-Auer S."/>
            <person name="Gabel C."/>
            <person name="Fuchs M."/>
            <person name="Duesterhoeft A."/>
            <person name="Fritzc C."/>
            <person name="Holzer E."/>
            <person name="Moestl D."/>
            <person name="Hilbert H."/>
            <person name="Borzym K."/>
            <person name="Langer I."/>
            <person name="Beck A."/>
            <person name="Lehrach H."/>
            <person name="Reinhardt R."/>
            <person name="Pohl T.M."/>
            <person name="Eger P."/>
            <person name="Zimmermann W."/>
            <person name="Wedler H."/>
            <person name="Wambutt R."/>
            <person name="Purnelle B."/>
            <person name="Goffeau A."/>
            <person name="Cadieu E."/>
            <person name="Dreano S."/>
            <person name="Gloux S."/>
            <person name="Lelaure V."/>
            <person name="Mottier S."/>
            <person name="Galibert F."/>
            <person name="Aves S.J."/>
            <person name="Xiang Z."/>
            <person name="Hunt C."/>
            <person name="Moore K."/>
            <person name="Hurst S.M."/>
            <person name="Lucas M."/>
            <person name="Rochet M."/>
            <person name="Gaillardin C."/>
            <person name="Tallada V.A."/>
            <person name="Garzon A."/>
            <person name="Thode G."/>
            <person name="Daga R.R."/>
            <person name="Cruzado L."/>
            <person name="Jimenez J."/>
            <person name="Sanchez M."/>
            <person name="del Rey F."/>
            <person name="Benito J."/>
            <person name="Dominguez A."/>
            <person name="Revuelta J.L."/>
            <person name="Moreno S."/>
            <person name="Armstrong J."/>
            <person name="Forsburg S.L."/>
            <person name="Cerutti L."/>
            <person name="Lowe T."/>
            <person name="McCombie W.R."/>
            <person name="Paulsen I."/>
            <person name="Potashkin J."/>
            <person name="Shpakovski G.V."/>
            <person name="Ussery D."/>
            <person name="Barrell B.G."/>
            <person name="Nurse P."/>
        </authorList>
    </citation>
    <scope>NUCLEOTIDE SEQUENCE [LARGE SCALE GENOMIC DNA]</scope>
    <source>
        <strain>972 / ATCC 24843</strain>
    </source>
</reference>
<reference key="2">
    <citation type="journal article" date="2011" name="J. Mol. Biol.">
        <title>Structure of the LSm657 complex: an assembly intermediate of the LSm1-7 and LSm2-8 rings.</title>
        <authorList>
            <person name="Mund M."/>
            <person name="Neu A."/>
            <person name="Ullmann J."/>
            <person name="Neu U."/>
            <person name="Sprangers R."/>
        </authorList>
    </citation>
    <scope>SUBUNIT</scope>
    <scope>IDENTIFICATION IN THE LSM1-LSM7 AND LSM2-LSM8 COMPLEXES</scope>
</reference>
<reference key="3">
    <citation type="journal article" date="2012" name="PLoS ONE">
        <title>Crystal structures of Lsm3, Lsm4 and Lsm5/6/7 from Schizosaccharomyces pombe.</title>
        <authorList>
            <person name="Wu D."/>
            <person name="Jiang S."/>
            <person name="Bowler M.W."/>
            <person name="Song H."/>
        </authorList>
    </citation>
    <scope>FUNCTION</scope>
    <scope>SUBUNIT</scope>
    <scope>IDENTIFICATION IN THE LSM1-LSM7 AND LSM2-LSM8 COMPLEXES</scope>
</reference>
<reference evidence="9 10 11 12" key="4">
    <citation type="journal article" date="2020" name="RNA">
        <title>Molecular basis for the distinct cellular functions of the Lsm1-7 and Lsm2-8 complexes.</title>
        <authorList>
            <person name="Montemayor E.J."/>
            <person name="Virta J.M."/>
            <person name="Hayes S.M."/>
            <person name="Nomura Y."/>
            <person name="Brow D.A."/>
            <person name="Butcher S.E."/>
        </authorList>
    </citation>
    <scope>X-RAY CRYSTALLOGRAPHY (1.81 ANGSTROMS) IN COMPLEX WITH RNA</scope>
    <scope>FUNCTION</scope>
    <scope>SUBUNIT</scope>
    <scope>IDENTIFICATION IN THE LSM1-LSM7 AND LSM2-LSM8 COMPLEXES</scope>
</reference>
<keyword id="KW-0002">3D-structure</keyword>
<keyword id="KW-0963">Cytoplasm</keyword>
<keyword id="KW-0507">mRNA processing</keyword>
<keyword id="KW-0508">mRNA splicing</keyword>
<keyword id="KW-0539">Nucleus</keyword>
<keyword id="KW-1185">Reference proteome</keyword>
<keyword id="KW-0687">Ribonucleoprotein</keyword>
<keyword id="KW-0694">RNA-binding</keyword>
<keyword id="KW-0747">Spliceosome</keyword>
<proteinExistence type="evidence at protein level"/>
<feature type="chain" id="PRO_0000125558" description="LSM complex subunit lsm2">
    <location>
        <begin position="1"/>
        <end position="96"/>
    </location>
</feature>
<feature type="domain" description="Sm" evidence="2">
    <location>
        <begin position="2"/>
        <end position="76"/>
    </location>
</feature>
<feature type="helix" evidence="13">
    <location>
        <begin position="2"/>
        <end position="8"/>
    </location>
</feature>
<feature type="turn" evidence="13">
    <location>
        <begin position="9"/>
        <end position="12"/>
    </location>
</feature>
<feature type="strand" evidence="13">
    <location>
        <begin position="13"/>
        <end position="19"/>
    </location>
</feature>
<feature type="strand" evidence="13">
    <location>
        <begin position="24"/>
        <end position="32"/>
    </location>
</feature>
<feature type="strand" evidence="13">
    <location>
        <begin position="38"/>
        <end position="45"/>
    </location>
</feature>
<feature type="helix" evidence="13">
    <location>
        <begin position="48"/>
        <end position="50"/>
    </location>
</feature>
<feature type="helix" evidence="13">
    <location>
        <begin position="52"/>
        <end position="54"/>
    </location>
</feature>
<feature type="strand" evidence="13">
    <location>
        <begin position="59"/>
        <end position="62"/>
    </location>
</feature>
<feature type="helix" evidence="13">
    <location>
        <begin position="64"/>
        <end position="66"/>
    </location>
</feature>
<feature type="strand" evidence="13">
    <location>
        <begin position="67"/>
        <end position="72"/>
    </location>
</feature>
<feature type="helix" evidence="13">
    <location>
        <begin position="76"/>
        <end position="92"/>
    </location>
</feature>
<protein>
    <recommendedName>
        <fullName evidence="6">LSM complex subunit lsm2</fullName>
    </recommendedName>
</protein>
<sequence length="96" mass="10989">MLFYSFFKTLIDTEVTVELKNDMSIRGILKSVDQFLNVKLENISVVDASKYPHMAAVKDLFIRGSVVRYVHMSSAYVDTILLADACRRDLANNKRQ</sequence>
<dbReference type="EMBL" id="CU329672">
    <property type="protein sequence ID" value="CAA22485.1"/>
    <property type="molecule type" value="Genomic_DNA"/>
</dbReference>
<dbReference type="PIR" id="T41031">
    <property type="entry name" value="T41031"/>
</dbReference>
<dbReference type="RefSeq" id="NP_588459.1">
    <property type="nucleotide sequence ID" value="NM_001023450.2"/>
</dbReference>
<dbReference type="PDB" id="6PPN">
    <property type="method" value="X-ray"/>
    <property type="resolution" value="1.91 A"/>
    <property type="chains" value="B/J=1-96"/>
</dbReference>
<dbReference type="PDB" id="6PPP">
    <property type="method" value="X-ray"/>
    <property type="resolution" value="2.33 A"/>
    <property type="chains" value="B/J=1-96"/>
</dbReference>
<dbReference type="PDB" id="6PPQ">
    <property type="method" value="X-ray"/>
    <property type="resolution" value="1.81 A"/>
    <property type="chains" value="B=1-96"/>
</dbReference>
<dbReference type="PDB" id="6PPV">
    <property type="method" value="X-ray"/>
    <property type="resolution" value="2.05 A"/>
    <property type="chains" value="B=1-96"/>
</dbReference>
<dbReference type="PDBsum" id="6PPN"/>
<dbReference type="PDBsum" id="6PPP"/>
<dbReference type="PDBsum" id="6PPQ"/>
<dbReference type="PDBsum" id="6PPV"/>
<dbReference type="SMR" id="O94408"/>
<dbReference type="BioGRID" id="275385">
    <property type="interactions" value="6"/>
</dbReference>
<dbReference type="FunCoup" id="O94408">
    <property type="interactions" value="812"/>
</dbReference>
<dbReference type="STRING" id="284812.O94408"/>
<dbReference type="iPTMnet" id="O94408"/>
<dbReference type="PaxDb" id="4896-SPCC1620.01c.1"/>
<dbReference type="EnsemblFungi" id="SPCC1620.01c.1">
    <property type="protein sequence ID" value="SPCC1620.01c.1:pep"/>
    <property type="gene ID" value="SPCC1620.01c"/>
</dbReference>
<dbReference type="GeneID" id="2538804"/>
<dbReference type="KEGG" id="spo:2538804"/>
<dbReference type="PomBase" id="SPCC1620.01c">
    <property type="gene designation" value="lsm2"/>
</dbReference>
<dbReference type="VEuPathDB" id="FungiDB:SPCC1620.01c"/>
<dbReference type="eggNOG" id="KOG3448">
    <property type="taxonomic scope" value="Eukaryota"/>
</dbReference>
<dbReference type="HOGENOM" id="CLU_130474_3_0_1"/>
<dbReference type="InParanoid" id="O94408"/>
<dbReference type="OMA" id="DNISCTD"/>
<dbReference type="PhylomeDB" id="O94408"/>
<dbReference type="Reactome" id="R-SPO-430039">
    <property type="pathway name" value="mRNA decay by 5' to 3' exoribonuclease"/>
</dbReference>
<dbReference type="PRO" id="PR:O94408"/>
<dbReference type="Proteomes" id="UP000002485">
    <property type="component" value="Chromosome III"/>
</dbReference>
<dbReference type="GO" id="GO:0071013">
    <property type="term" value="C:catalytic step 2 spliceosome"/>
    <property type="evidence" value="ECO:0000318"/>
    <property type="project" value="GO_Central"/>
</dbReference>
<dbReference type="GO" id="GO:1990726">
    <property type="term" value="C:Lsm1-7-Pat1 complex"/>
    <property type="evidence" value="ECO:0000269"/>
    <property type="project" value="PomBase"/>
</dbReference>
<dbReference type="GO" id="GO:0120115">
    <property type="term" value="C:Lsm2-8 complex"/>
    <property type="evidence" value="ECO:0000269"/>
    <property type="project" value="PomBase"/>
</dbReference>
<dbReference type="GO" id="GO:0005730">
    <property type="term" value="C:nucleolus"/>
    <property type="evidence" value="ECO:0000250"/>
    <property type="project" value="PomBase"/>
</dbReference>
<dbReference type="GO" id="GO:0000932">
    <property type="term" value="C:P-body"/>
    <property type="evidence" value="ECO:0000318"/>
    <property type="project" value="GO_Central"/>
</dbReference>
<dbReference type="GO" id="GO:0071011">
    <property type="term" value="C:precatalytic spliceosome"/>
    <property type="evidence" value="ECO:0000318"/>
    <property type="project" value="GO_Central"/>
</dbReference>
<dbReference type="GO" id="GO:0005697">
    <property type="term" value="C:telomerase holoenzyme complex"/>
    <property type="evidence" value="ECO:0000269"/>
    <property type="project" value="PomBase"/>
</dbReference>
<dbReference type="GO" id="GO:0005686">
    <property type="term" value="C:U2 snRNP"/>
    <property type="evidence" value="ECO:0000269"/>
    <property type="project" value="PomBase"/>
</dbReference>
<dbReference type="GO" id="GO:0046540">
    <property type="term" value="C:U4/U6 x U5 tri-snRNP complex"/>
    <property type="evidence" value="ECO:0000318"/>
    <property type="project" value="GO_Central"/>
</dbReference>
<dbReference type="GO" id="GO:0005682">
    <property type="term" value="C:U5 snRNP"/>
    <property type="evidence" value="ECO:0000314"/>
    <property type="project" value="PomBase"/>
</dbReference>
<dbReference type="GO" id="GO:0005688">
    <property type="term" value="C:U6 snRNP"/>
    <property type="evidence" value="ECO:0000269"/>
    <property type="project" value="PomBase"/>
</dbReference>
<dbReference type="GO" id="GO:0030620">
    <property type="term" value="F:U2 snRNA binding"/>
    <property type="evidence" value="ECO:0000314"/>
    <property type="project" value="PomBase"/>
</dbReference>
<dbReference type="GO" id="GO:0000398">
    <property type="term" value="P:mRNA splicing, via spliceosome"/>
    <property type="evidence" value="ECO:0000318"/>
    <property type="project" value="GO_Central"/>
</dbReference>
<dbReference type="GO" id="GO:0034337">
    <property type="term" value="P:RNA folding"/>
    <property type="evidence" value="ECO:0007669"/>
    <property type="project" value="GOC"/>
</dbReference>
<dbReference type="GO" id="GO:1905323">
    <property type="term" value="P:telomerase holoenzyme complex assembly"/>
    <property type="evidence" value="ECO:0000304"/>
    <property type="project" value="PomBase"/>
</dbReference>
<dbReference type="CDD" id="cd01725">
    <property type="entry name" value="LSm2"/>
    <property type="match status" value="1"/>
</dbReference>
<dbReference type="FunFam" id="2.30.30.100:FF:000009">
    <property type="entry name" value="U6 snRNA-associated Sm-like protein LSm2"/>
    <property type="match status" value="1"/>
</dbReference>
<dbReference type="Gene3D" id="2.30.30.100">
    <property type="match status" value="1"/>
</dbReference>
<dbReference type="InterPro" id="IPR010920">
    <property type="entry name" value="LSM_dom_sf"/>
</dbReference>
<dbReference type="InterPro" id="IPR047575">
    <property type="entry name" value="Sm"/>
</dbReference>
<dbReference type="InterPro" id="IPR001163">
    <property type="entry name" value="Sm_dom_euk/arc"/>
</dbReference>
<dbReference type="InterPro" id="IPR016654">
    <property type="entry name" value="U6_snRNA_Lsm2"/>
</dbReference>
<dbReference type="PANTHER" id="PTHR13829">
    <property type="entry name" value="SNRNP CORE PROTEIN FAMILY MEMBER"/>
    <property type="match status" value="1"/>
</dbReference>
<dbReference type="PANTHER" id="PTHR13829:SF2">
    <property type="entry name" value="U6 SNRNA-ASSOCIATED SM-LIKE PROTEIN LSM2"/>
    <property type="match status" value="1"/>
</dbReference>
<dbReference type="Pfam" id="PF01423">
    <property type="entry name" value="LSM"/>
    <property type="match status" value="1"/>
</dbReference>
<dbReference type="PIRSF" id="PIRSF016394">
    <property type="entry name" value="U6_snRNA_Lsm2"/>
    <property type="match status" value="1"/>
</dbReference>
<dbReference type="SMART" id="SM00651">
    <property type="entry name" value="Sm"/>
    <property type="match status" value="1"/>
</dbReference>
<dbReference type="SUPFAM" id="SSF50182">
    <property type="entry name" value="Sm-like ribonucleoproteins"/>
    <property type="match status" value="1"/>
</dbReference>
<dbReference type="PROSITE" id="PS52002">
    <property type="entry name" value="SM"/>
    <property type="match status" value="1"/>
</dbReference>
<name>LSM2_SCHPO</name>
<comment type="function">
    <text evidence="1 4 5">Component of LSm protein complexes, which are involved in RNA processing and may function in a chaperone-like manner (PubMed:22615807). Component of the cytoplasmic LSM1-LSM7 complex which is involved in mRNA degradation by activating the decapping step (PubMed:32518066). The LSM1-LSM7 complex loads onto the 3'-end of single stranded RNA (PubMed:32518066). Component of the nuclear LSM2-LSM8 complex, which is involved in spliceosome assembly (PubMed:32518066). The LSM2-LSM8 complex plays a role in the biogenesis of the spliceosomal U4/U6-U5 tri-snRNP complex by accelerating prp24-mediated annealing of U4/U6 di-snRNA (By similarity). The LSM2-LSM8 complex binds U6 snRNA terminating with a cyclic 2',3' phosphate group; RNA with an unmodified 3' hydroxyl or non-cyclic 3' phosphate is bound less tightly (PubMed:32518066).</text>
</comment>
<comment type="subunit">
    <text evidence="3 4 5 7 8">Component of the heptameric LSM1-LSM7 complex that forms a seven-membered ring structure with a donut shape (Probable) (PubMed:32518066). The LSm subunits are arranged in the order lsm1, lsm2, lsm3, lsm6, lsm5, lsm7 and lsm4 (PubMed:22001694, PubMed:22615807, PubMed:32518066). Component of the heptameric LSM2-LSM8 complex that forms a seven-membered ring structure with a donut shape (Probable) (PubMed:32518066). The LSm subunits are arranged in the order lsm8, lsm2, lsm3, lsm6, lsm5, lsm7 and lsm4 (PubMed:22001694, PubMed:22615807, PubMed:32518066).</text>
</comment>
<comment type="subcellular location">
    <subcellularLocation>
        <location evidence="1">Nucleus</location>
    </subcellularLocation>
    <subcellularLocation>
        <location evidence="1">Cytoplasm</location>
    </subcellularLocation>
</comment>
<comment type="similarity">
    <text evidence="6">Belongs to the snRNP Sm proteins family.</text>
</comment>
<evidence type="ECO:0000250" key="1">
    <source>
        <dbReference type="UniProtKB" id="P38203"/>
    </source>
</evidence>
<evidence type="ECO:0000255" key="2">
    <source>
        <dbReference type="PROSITE-ProRule" id="PRU01346"/>
    </source>
</evidence>
<evidence type="ECO:0000269" key="3">
    <source>
    </source>
</evidence>
<evidence type="ECO:0000269" key="4">
    <source>
    </source>
</evidence>
<evidence type="ECO:0000269" key="5">
    <source>
    </source>
</evidence>
<evidence type="ECO:0000305" key="6"/>
<evidence type="ECO:0000305" key="7">
    <source>
    </source>
</evidence>
<evidence type="ECO:0000305" key="8">
    <source>
    </source>
</evidence>
<evidence type="ECO:0007744" key="9">
    <source>
        <dbReference type="PDB" id="6PPN"/>
    </source>
</evidence>
<evidence type="ECO:0007744" key="10">
    <source>
        <dbReference type="PDB" id="6PPP"/>
    </source>
</evidence>
<evidence type="ECO:0007744" key="11">
    <source>
        <dbReference type="PDB" id="6PPQ"/>
    </source>
</evidence>
<evidence type="ECO:0007744" key="12">
    <source>
        <dbReference type="PDB" id="6PPV"/>
    </source>
</evidence>
<evidence type="ECO:0007829" key="13">
    <source>
        <dbReference type="PDB" id="6PPQ"/>
    </source>
</evidence>